<evidence type="ECO:0000255" key="1">
    <source>
        <dbReference type="HAMAP-Rule" id="MF_01341"/>
    </source>
</evidence>
<evidence type="ECO:0000256" key="2">
    <source>
        <dbReference type="SAM" id="MobiDB-lite"/>
    </source>
</evidence>
<evidence type="ECO:0000305" key="3"/>
<accession>B7V663</accession>
<organism>
    <name type="scientific">Pseudomonas aeruginosa (strain LESB58)</name>
    <dbReference type="NCBI Taxonomy" id="557722"/>
    <lineage>
        <taxon>Bacteria</taxon>
        <taxon>Pseudomonadati</taxon>
        <taxon>Pseudomonadota</taxon>
        <taxon>Gammaproteobacteria</taxon>
        <taxon>Pseudomonadales</taxon>
        <taxon>Pseudomonadaceae</taxon>
        <taxon>Pseudomonas</taxon>
    </lineage>
</organism>
<keyword id="KW-0687">Ribonucleoprotein</keyword>
<keyword id="KW-0689">Ribosomal protein</keyword>
<keyword id="KW-0694">RNA-binding</keyword>
<keyword id="KW-0699">rRNA-binding</keyword>
<comment type="function">
    <text evidence="1">Binds to the 23S rRNA.</text>
</comment>
<comment type="subunit">
    <text evidence="1">Part of the 50S ribosomal subunit.</text>
</comment>
<comment type="similarity">
    <text evidence="1">Belongs to the universal ribosomal protein uL15 family.</text>
</comment>
<name>RL15_PSEA8</name>
<gene>
    <name evidence="1" type="primary">rplO</name>
    <name type="ordered locus">PLES_06841</name>
</gene>
<protein>
    <recommendedName>
        <fullName evidence="1">Large ribosomal subunit protein uL15</fullName>
    </recommendedName>
    <alternativeName>
        <fullName evidence="3">50S ribosomal protein L15</fullName>
    </alternativeName>
</protein>
<proteinExistence type="inferred from homology"/>
<sequence>MQLNDLRSAPGARREKHRPGRGIGSGLGKTGGRGHKGLTSRSGGKVAPGFEGGQQPLHRRLPKFGFVSLKAMDRAEVRTSELAKVEGDVVSLQTLKDANLINQHVQRVKVMLSGEVGRAVTLKGIAATKGARAAIEAAGGKFED</sequence>
<reference key="1">
    <citation type="journal article" date="2009" name="Genome Res.">
        <title>Newly introduced genomic prophage islands are critical determinants of in vivo competitiveness in the Liverpool epidemic strain of Pseudomonas aeruginosa.</title>
        <authorList>
            <person name="Winstanley C."/>
            <person name="Langille M.G.I."/>
            <person name="Fothergill J.L."/>
            <person name="Kukavica-Ibrulj I."/>
            <person name="Paradis-Bleau C."/>
            <person name="Sanschagrin F."/>
            <person name="Thomson N.R."/>
            <person name="Winsor G.L."/>
            <person name="Quail M.A."/>
            <person name="Lennard N."/>
            <person name="Bignell A."/>
            <person name="Clarke L."/>
            <person name="Seeger K."/>
            <person name="Saunders D."/>
            <person name="Harris D."/>
            <person name="Parkhill J."/>
            <person name="Hancock R.E.W."/>
            <person name="Brinkman F.S.L."/>
            <person name="Levesque R.C."/>
        </authorList>
    </citation>
    <scope>NUCLEOTIDE SEQUENCE [LARGE SCALE GENOMIC DNA]</scope>
    <source>
        <strain>LESB58</strain>
    </source>
</reference>
<feature type="chain" id="PRO_1000142862" description="Large ribosomal subunit protein uL15">
    <location>
        <begin position="1"/>
        <end position="144"/>
    </location>
</feature>
<feature type="region of interest" description="Disordered" evidence="2">
    <location>
        <begin position="1"/>
        <end position="57"/>
    </location>
</feature>
<feature type="compositionally biased region" description="Gly residues" evidence="2">
    <location>
        <begin position="21"/>
        <end position="31"/>
    </location>
</feature>
<dbReference type="EMBL" id="FM209186">
    <property type="protein sequence ID" value="CAW25411.1"/>
    <property type="molecule type" value="Genomic_DNA"/>
</dbReference>
<dbReference type="RefSeq" id="WP_003093695.1">
    <property type="nucleotide sequence ID" value="NC_011770.1"/>
</dbReference>
<dbReference type="SMR" id="B7V663"/>
<dbReference type="GeneID" id="77219217"/>
<dbReference type="KEGG" id="pag:PLES_06841"/>
<dbReference type="HOGENOM" id="CLU_055188_4_2_6"/>
<dbReference type="GO" id="GO:0022625">
    <property type="term" value="C:cytosolic large ribosomal subunit"/>
    <property type="evidence" value="ECO:0007669"/>
    <property type="project" value="TreeGrafter"/>
</dbReference>
<dbReference type="GO" id="GO:0019843">
    <property type="term" value="F:rRNA binding"/>
    <property type="evidence" value="ECO:0007669"/>
    <property type="project" value="UniProtKB-UniRule"/>
</dbReference>
<dbReference type="GO" id="GO:0003735">
    <property type="term" value="F:structural constituent of ribosome"/>
    <property type="evidence" value="ECO:0007669"/>
    <property type="project" value="InterPro"/>
</dbReference>
<dbReference type="GO" id="GO:0006412">
    <property type="term" value="P:translation"/>
    <property type="evidence" value="ECO:0007669"/>
    <property type="project" value="UniProtKB-UniRule"/>
</dbReference>
<dbReference type="FunFam" id="3.100.10.10:FF:000003">
    <property type="entry name" value="50S ribosomal protein L15"/>
    <property type="match status" value="1"/>
</dbReference>
<dbReference type="Gene3D" id="3.100.10.10">
    <property type="match status" value="1"/>
</dbReference>
<dbReference type="HAMAP" id="MF_01341">
    <property type="entry name" value="Ribosomal_uL15"/>
    <property type="match status" value="1"/>
</dbReference>
<dbReference type="InterPro" id="IPR030878">
    <property type="entry name" value="Ribosomal_uL15"/>
</dbReference>
<dbReference type="InterPro" id="IPR021131">
    <property type="entry name" value="Ribosomal_uL15/eL18"/>
</dbReference>
<dbReference type="InterPro" id="IPR036227">
    <property type="entry name" value="Ribosomal_uL15/eL18_sf"/>
</dbReference>
<dbReference type="InterPro" id="IPR005749">
    <property type="entry name" value="Ribosomal_uL15_bac-type"/>
</dbReference>
<dbReference type="InterPro" id="IPR001196">
    <property type="entry name" value="Ribosomal_uL15_CS"/>
</dbReference>
<dbReference type="NCBIfam" id="TIGR01071">
    <property type="entry name" value="rplO_bact"/>
    <property type="match status" value="1"/>
</dbReference>
<dbReference type="PANTHER" id="PTHR12934">
    <property type="entry name" value="50S RIBOSOMAL PROTEIN L15"/>
    <property type="match status" value="1"/>
</dbReference>
<dbReference type="PANTHER" id="PTHR12934:SF11">
    <property type="entry name" value="LARGE RIBOSOMAL SUBUNIT PROTEIN UL15M"/>
    <property type="match status" value="1"/>
</dbReference>
<dbReference type="Pfam" id="PF00828">
    <property type="entry name" value="Ribosomal_L27A"/>
    <property type="match status" value="1"/>
</dbReference>
<dbReference type="SUPFAM" id="SSF52080">
    <property type="entry name" value="Ribosomal proteins L15p and L18e"/>
    <property type="match status" value="1"/>
</dbReference>
<dbReference type="PROSITE" id="PS00475">
    <property type="entry name" value="RIBOSOMAL_L15"/>
    <property type="match status" value="1"/>
</dbReference>